<organism>
    <name type="scientific">Psychrobacter arcticus (strain DSM 17307 / VKM B-2377 / 273-4)</name>
    <dbReference type="NCBI Taxonomy" id="259536"/>
    <lineage>
        <taxon>Bacteria</taxon>
        <taxon>Pseudomonadati</taxon>
        <taxon>Pseudomonadota</taxon>
        <taxon>Gammaproteobacteria</taxon>
        <taxon>Moraxellales</taxon>
        <taxon>Moraxellaceae</taxon>
        <taxon>Psychrobacter</taxon>
    </lineage>
</organism>
<protein>
    <recommendedName>
        <fullName evidence="1">Deoxyuridine 5'-triphosphate nucleotidohydrolase</fullName>
        <shortName evidence="1">dUTPase</shortName>
        <ecNumber evidence="1">3.6.1.23</ecNumber>
    </recommendedName>
    <alternativeName>
        <fullName evidence="1">dUTP pyrophosphatase</fullName>
    </alternativeName>
</protein>
<dbReference type="EC" id="3.6.1.23" evidence="1"/>
<dbReference type="EMBL" id="CP000082">
    <property type="protein sequence ID" value="AAZ18441.1"/>
    <property type="molecule type" value="Genomic_DNA"/>
</dbReference>
<dbReference type="RefSeq" id="WP_011279870.1">
    <property type="nucleotide sequence ID" value="NC_007204.1"/>
</dbReference>
<dbReference type="SMR" id="Q4FU67"/>
<dbReference type="STRING" id="259536.Psyc_0581"/>
<dbReference type="KEGG" id="par:Psyc_0581"/>
<dbReference type="eggNOG" id="COG0756">
    <property type="taxonomic scope" value="Bacteria"/>
</dbReference>
<dbReference type="HOGENOM" id="CLU_068508_1_1_6"/>
<dbReference type="OrthoDB" id="9809956at2"/>
<dbReference type="UniPathway" id="UPA00610">
    <property type="reaction ID" value="UER00666"/>
</dbReference>
<dbReference type="Proteomes" id="UP000000546">
    <property type="component" value="Chromosome"/>
</dbReference>
<dbReference type="GO" id="GO:0004170">
    <property type="term" value="F:dUTP diphosphatase activity"/>
    <property type="evidence" value="ECO:0007669"/>
    <property type="project" value="UniProtKB-UniRule"/>
</dbReference>
<dbReference type="GO" id="GO:0000287">
    <property type="term" value="F:magnesium ion binding"/>
    <property type="evidence" value="ECO:0007669"/>
    <property type="project" value="UniProtKB-UniRule"/>
</dbReference>
<dbReference type="GO" id="GO:0006226">
    <property type="term" value="P:dUMP biosynthetic process"/>
    <property type="evidence" value="ECO:0007669"/>
    <property type="project" value="UniProtKB-UniRule"/>
</dbReference>
<dbReference type="GO" id="GO:0046081">
    <property type="term" value="P:dUTP catabolic process"/>
    <property type="evidence" value="ECO:0007669"/>
    <property type="project" value="InterPro"/>
</dbReference>
<dbReference type="CDD" id="cd07557">
    <property type="entry name" value="trimeric_dUTPase"/>
    <property type="match status" value="1"/>
</dbReference>
<dbReference type="FunFam" id="2.70.40.10:FF:000002">
    <property type="entry name" value="dUTP diphosphatase"/>
    <property type="match status" value="1"/>
</dbReference>
<dbReference type="Gene3D" id="2.70.40.10">
    <property type="match status" value="1"/>
</dbReference>
<dbReference type="HAMAP" id="MF_00116">
    <property type="entry name" value="dUTPase_bact"/>
    <property type="match status" value="1"/>
</dbReference>
<dbReference type="InterPro" id="IPR008181">
    <property type="entry name" value="dUTPase"/>
</dbReference>
<dbReference type="InterPro" id="IPR029054">
    <property type="entry name" value="dUTPase-like"/>
</dbReference>
<dbReference type="InterPro" id="IPR036157">
    <property type="entry name" value="dUTPase-like_sf"/>
</dbReference>
<dbReference type="InterPro" id="IPR033704">
    <property type="entry name" value="dUTPase_trimeric"/>
</dbReference>
<dbReference type="NCBIfam" id="TIGR00576">
    <property type="entry name" value="dut"/>
    <property type="match status" value="1"/>
</dbReference>
<dbReference type="NCBIfam" id="NF001862">
    <property type="entry name" value="PRK00601.1"/>
    <property type="match status" value="1"/>
</dbReference>
<dbReference type="PANTHER" id="PTHR11241">
    <property type="entry name" value="DEOXYURIDINE 5'-TRIPHOSPHATE NUCLEOTIDOHYDROLASE"/>
    <property type="match status" value="1"/>
</dbReference>
<dbReference type="PANTHER" id="PTHR11241:SF0">
    <property type="entry name" value="DEOXYURIDINE 5'-TRIPHOSPHATE NUCLEOTIDOHYDROLASE"/>
    <property type="match status" value="1"/>
</dbReference>
<dbReference type="Pfam" id="PF00692">
    <property type="entry name" value="dUTPase"/>
    <property type="match status" value="1"/>
</dbReference>
<dbReference type="SUPFAM" id="SSF51283">
    <property type="entry name" value="dUTPase-like"/>
    <property type="match status" value="1"/>
</dbReference>
<name>DUT_PSYA2</name>
<proteinExistence type="inferred from homology"/>
<accession>Q4FU67</accession>
<sequence>MQAVQVKVLNPKITEDKAFSLPTRATDGSAGIDLRACIDEPLTIKAGTTHLIGTGLAIYIQDPNFAGMILPRSGLGHKHGIVLGNLVGLIDADYQGELMVSIWNRSLEDFVLNPAERMAQYVVVPVARPEFEVVTEFSDTSARGAGGFGHSGRQ</sequence>
<comment type="function">
    <text evidence="1">This enzyme is involved in nucleotide metabolism: it produces dUMP, the immediate precursor of thymidine nucleotides and it decreases the intracellular concentration of dUTP so that uracil cannot be incorporated into DNA.</text>
</comment>
<comment type="catalytic activity">
    <reaction evidence="1">
        <text>dUTP + H2O = dUMP + diphosphate + H(+)</text>
        <dbReference type="Rhea" id="RHEA:10248"/>
        <dbReference type="ChEBI" id="CHEBI:15377"/>
        <dbReference type="ChEBI" id="CHEBI:15378"/>
        <dbReference type="ChEBI" id="CHEBI:33019"/>
        <dbReference type="ChEBI" id="CHEBI:61555"/>
        <dbReference type="ChEBI" id="CHEBI:246422"/>
        <dbReference type="EC" id="3.6.1.23"/>
    </reaction>
</comment>
<comment type="cofactor">
    <cofactor evidence="1">
        <name>Mg(2+)</name>
        <dbReference type="ChEBI" id="CHEBI:18420"/>
    </cofactor>
</comment>
<comment type="pathway">
    <text evidence="1">Pyrimidine metabolism; dUMP biosynthesis; dUMP from dCTP (dUTP route): step 2/2.</text>
</comment>
<comment type="similarity">
    <text evidence="1">Belongs to the dUTPase family.</text>
</comment>
<evidence type="ECO:0000255" key="1">
    <source>
        <dbReference type="HAMAP-Rule" id="MF_00116"/>
    </source>
</evidence>
<keyword id="KW-0378">Hydrolase</keyword>
<keyword id="KW-0460">Magnesium</keyword>
<keyword id="KW-0479">Metal-binding</keyword>
<keyword id="KW-0546">Nucleotide metabolism</keyword>
<keyword id="KW-1185">Reference proteome</keyword>
<reference key="1">
    <citation type="journal article" date="2010" name="Appl. Environ. Microbiol.">
        <title>The genome sequence of Psychrobacter arcticus 273-4, a psychroactive Siberian permafrost bacterium, reveals mechanisms for adaptation to low-temperature growth.</title>
        <authorList>
            <person name="Ayala-del-Rio H.L."/>
            <person name="Chain P.S."/>
            <person name="Grzymski J.J."/>
            <person name="Ponder M.A."/>
            <person name="Ivanova N."/>
            <person name="Bergholz P.W."/>
            <person name="Di Bartolo G."/>
            <person name="Hauser L."/>
            <person name="Land M."/>
            <person name="Bakermans C."/>
            <person name="Rodrigues D."/>
            <person name="Klappenbach J."/>
            <person name="Zarka D."/>
            <person name="Larimer F."/>
            <person name="Richardson P."/>
            <person name="Murray A."/>
            <person name="Thomashow M."/>
            <person name="Tiedje J.M."/>
        </authorList>
    </citation>
    <scope>NUCLEOTIDE SEQUENCE [LARGE SCALE GENOMIC DNA]</scope>
    <source>
        <strain>DSM 17307 / VKM B-2377 / 273-4</strain>
    </source>
</reference>
<feature type="chain" id="PRO_0000231423" description="Deoxyuridine 5'-triphosphate nucleotidohydrolase">
    <location>
        <begin position="1"/>
        <end position="154"/>
    </location>
</feature>
<feature type="binding site" evidence="1">
    <location>
        <begin position="72"/>
        <end position="74"/>
    </location>
    <ligand>
        <name>substrate</name>
    </ligand>
</feature>
<feature type="binding site" evidence="1">
    <location>
        <position position="85"/>
    </location>
    <ligand>
        <name>substrate</name>
    </ligand>
</feature>
<feature type="binding site" evidence="1">
    <location>
        <begin position="89"/>
        <end position="91"/>
    </location>
    <ligand>
        <name>substrate</name>
    </ligand>
</feature>
<feature type="binding site" evidence="1">
    <location>
        <position position="99"/>
    </location>
    <ligand>
        <name>substrate</name>
    </ligand>
</feature>
<gene>
    <name evidence="1" type="primary">dut</name>
    <name type="ordered locus">Psyc_0581</name>
</gene>